<gene>
    <name evidence="1 3" type="primary">metXA</name>
    <name evidence="4" type="ordered locus">Saut_0857</name>
</gene>
<accession>E0UR96</accession>
<organism>
    <name type="scientific">Sulfurimonas autotrophica (strain ATCC BAA-671 / DSM 16294 / JCM 11897 / OK10)</name>
    <dbReference type="NCBI Taxonomy" id="563040"/>
    <lineage>
        <taxon>Bacteria</taxon>
        <taxon>Pseudomonadati</taxon>
        <taxon>Campylobacterota</taxon>
        <taxon>Epsilonproteobacteria</taxon>
        <taxon>Campylobacterales</taxon>
        <taxon>Sulfurimonadaceae</taxon>
        <taxon>Sulfurimonas</taxon>
    </lineage>
</organism>
<dbReference type="EC" id="2.3.1.31" evidence="1 2"/>
<dbReference type="EMBL" id="CP002205">
    <property type="protein sequence ID" value="ADN08906.1"/>
    <property type="molecule type" value="Genomic_DNA"/>
</dbReference>
<dbReference type="RefSeq" id="WP_013326662.1">
    <property type="nucleotide sequence ID" value="NC_014506.1"/>
</dbReference>
<dbReference type="SMR" id="E0UR96"/>
<dbReference type="STRING" id="563040.Saut_0857"/>
<dbReference type="ESTHER" id="sulao-metxa">
    <property type="family name" value="Homoserine_transacetylase"/>
</dbReference>
<dbReference type="KEGG" id="sua:Saut_0857"/>
<dbReference type="eggNOG" id="COG2021">
    <property type="taxonomic scope" value="Bacteria"/>
</dbReference>
<dbReference type="HOGENOM" id="CLU_028760_1_2_7"/>
<dbReference type="OrthoDB" id="9800754at2"/>
<dbReference type="UniPathway" id="UPA00051">
    <property type="reaction ID" value="UER00074"/>
</dbReference>
<dbReference type="Proteomes" id="UP000007803">
    <property type="component" value="Chromosome"/>
</dbReference>
<dbReference type="GO" id="GO:0005737">
    <property type="term" value="C:cytoplasm"/>
    <property type="evidence" value="ECO:0007669"/>
    <property type="project" value="UniProtKB-SubCell"/>
</dbReference>
<dbReference type="GO" id="GO:0004414">
    <property type="term" value="F:homoserine O-acetyltransferase activity"/>
    <property type="evidence" value="ECO:0007669"/>
    <property type="project" value="UniProtKB-UniRule"/>
</dbReference>
<dbReference type="GO" id="GO:0009092">
    <property type="term" value="P:homoserine metabolic process"/>
    <property type="evidence" value="ECO:0007669"/>
    <property type="project" value="TreeGrafter"/>
</dbReference>
<dbReference type="GO" id="GO:0009086">
    <property type="term" value="P:methionine biosynthetic process"/>
    <property type="evidence" value="ECO:0007669"/>
    <property type="project" value="UniProtKB-UniRule"/>
</dbReference>
<dbReference type="Gene3D" id="1.10.1740.110">
    <property type="match status" value="1"/>
</dbReference>
<dbReference type="Gene3D" id="3.40.50.1820">
    <property type="entry name" value="alpha/beta hydrolase"/>
    <property type="match status" value="1"/>
</dbReference>
<dbReference type="HAMAP" id="MF_00296">
    <property type="entry name" value="MetX_acyltransf"/>
    <property type="match status" value="1"/>
</dbReference>
<dbReference type="InterPro" id="IPR000073">
    <property type="entry name" value="AB_hydrolase_1"/>
</dbReference>
<dbReference type="InterPro" id="IPR029058">
    <property type="entry name" value="AB_hydrolase_fold"/>
</dbReference>
<dbReference type="InterPro" id="IPR008220">
    <property type="entry name" value="HAT_MetX-like"/>
</dbReference>
<dbReference type="NCBIfam" id="TIGR01392">
    <property type="entry name" value="homoserO_Ac_trn"/>
    <property type="match status" value="1"/>
</dbReference>
<dbReference type="NCBIfam" id="NF001209">
    <property type="entry name" value="PRK00175.1"/>
    <property type="match status" value="1"/>
</dbReference>
<dbReference type="PANTHER" id="PTHR32268">
    <property type="entry name" value="HOMOSERINE O-ACETYLTRANSFERASE"/>
    <property type="match status" value="1"/>
</dbReference>
<dbReference type="PANTHER" id="PTHR32268:SF11">
    <property type="entry name" value="HOMOSERINE O-ACETYLTRANSFERASE"/>
    <property type="match status" value="1"/>
</dbReference>
<dbReference type="Pfam" id="PF00561">
    <property type="entry name" value="Abhydrolase_1"/>
    <property type="match status" value="1"/>
</dbReference>
<dbReference type="PIRSF" id="PIRSF000443">
    <property type="entry name" value="Homoser_Ac_trans"/>
    <property type="match status" value="1"/>
</dbReference>
<dbReference type="SUPFAM" id="SSF53474">
    <property type="entry name" value="alpha/beta-Hydrolases"/>
    <property type="match status" value="1"/>
</dbReference>
<proteinExistence type="evidence at protein level"/>
<feature type="chain" id="PRO_0000440299" description="Homoserine O-acetyltransferase">
    <location>
        <begin position="1"/>
        <end position="368"/>
    </location>
</feature>
<feature type="domain" description="AB hydrolase-1" evidence="1">
    <location>
        <begin position="43"/>
        <end position="354"/>
    </location>
</feature>
<feature type="active site" description="Nucleophile" evidence="1">
    <location>
        <position position="148"/>
    </location>
</feature>
<feature type="active site" evidence="1">
    <location>
        <position position="314"/>
    </location>
</feature>
<feature type="active site" evidence="1">
    <location>
        <position position="348"/>
    </location>
</feature>
<feature type="binding site" evidence="1">
    <location>
        <position position="220"/>
    </location>
    <ligand>
        <name>substrate</name>
    </ligand>
</feature>
<feature type="binding site" evidence="1">
    <location>
        <position position="349"/>
    </location>
    <ligand>
        <name>substrate</name>
    </ligand>
</feature>
<name>METXA_SULAO</name>
<keyword id="KW-0012">Acyltransferase</keyword>
<keyword id="KW-0028">Amino-acid biosynthesis</keyword>
<keyword id="KW-0963">Cytoplasm</keyword>
<keyword id="KW-0486">Methionine biosynthesis</keyword>
<keyword id="KW-1185">Reference proteome</keyword>
<keyword id="KW-0808">Transferase</keyword>
<sequence>MSLNLQTYTEHFTNPLYLESGRILEPYDITYETYGTMNEDKSNVVVVCHALTGSHHAAGLYEDETKPGWWDGFIGSGKAIDTDKYFVICSNVIGSCFGSTGPMSLQHPYQEPYRYKFPVVSIKDMVKAQRILFDRLDIHRVHAIVGGSMGGMQALQFAIHYPNFANKIIALATTHATQPWAIAFNKVAQESILNDPDFKQGYYDPDLLKEQGLSGMAVGRMAGHISFLSHESMREKFGRDYKLTDGLYELFGKFQVESYLEYNGYNFTKWFDPLAYLYITKAINIYDLSRGFDSLAEALKRVTSALYLVSFKNDLLFKNFEMKEIADELDKIGNKNHSYIDVKSDYGHDAFLVELNKFENHVKDALNG</sequence>
<comment type="function">
    <text evidence="1 2">Transfers an acetyl group from acetyl-CoA to L-homoserine, forming acetyl-L-homoserine.</text>
</comment>
<comment type="catalytic activity">
    <reaction evidence="1 2">
        <text>L-homoserine + acetyl-CoA = O-acetyl-L-homoserine + CoA</text>
        <dbReference type="Rhea" id="RHEA:13701"/>
        <dbReference type="ChEBI" id="CHEBI:57287"/>
        <dbReference type="ChEBI" id="CHEBI:57288"/>
        <dbReference type="ChEBI" id="CHEBI:57476"/>
        <dbReference type="ChEBI" id="CHEBI:57716"/>
        <dbReference type="EC" id="2.3.1.31"/>
    </reaction>
</comment>
<comment type="pathway">
    <text evidence="1">Amino-acid biosynthesis; L-methionine biosynthesis via de novo pathway; O-acetyl-L-homoserine from L-homoserine: step 1/1.</text>
</comment>
<comment type="subunit">
    <text evidence="1">Homodimer.</text>
</comment>
<comment type="subcellular location">
    <subcellularLocation>
        <location evidence="1">Cytoplasm</location>
    </subcellularLocation>
</comment>
<comment type="similarity">
    <text evidence="1">Belongs to the AB hydrolase superfamily. MetX family.</text>
</comment>
<evidence type="ECO:0000255" key="1">
    <source>
        <dbReference type="HAMAP-Rule" id="MF_00296"/>
    </source>
</evidence>
<evidence type="ECO:0000269" key="2">
    <source>
    </source>
</evidence>
<evidence type="ECO:0000303" key="3">
    <source>
    </source>
</evidence>
<evidence type="ECO:0000312" key="4">
    <source>
        <dbReference type="EMBL" id="ADN08906.1"/>
    </source>
</evidence>
<reference key="1">
    <citation type="journal article" date="2010" name="Stand. Genomic Sci.">
        <title>Complete genome sequence of Sulfurimonas autotrophica type strain (OK10).</title>
        <authorList>
            <person name="Sikorski J."/>
            <person name="Munk C."/>
            <person name="Lapidus A."/>
            <person name="Ngatchou Djao O.D."/>
            <person name="Lucas S."/>
            <person name="Glavina Del Rio T."/>
            <person name="Nolan M."/>
            <person name="Tice H."/>
            <person name="Han C."/>
            <person name="Cheng J.F."/>
            <person name="Tapia R."/>
            <person name="Goodwin L."/>
            <person name="Pitluck S."/>
            <person name="Liolios K."/>
            <person name="Ivanova N."/>
            <person name="Mavromatis K."/>
            <person name="Mikhailova N."/>
            <person name="Pati A."/>
            <person name="Sims D."/>
            <person name="Meincke L."/>
            <person name="Brettin T."/>
            <person name="Detter J.C."/>
            <person name="Chen A."/>
            <person name="Palaniappan K."/>
            <person name="Land M."/>
            <person name="Hauser L."/>
            <person name="Chang Y.J."/>
            <person name="Jeffries C.D."/>
            <person name="Rohde M."/>
            <person name="Lang E."/>
            <person name="Spring S."/>
            <person name="Goeker M."/>
            <person name="Woyke T."/>
            <person name="Bristow J."/>
            <person name="Eisen J.A."/>
            <person name="Markowitz V."/>
            <person name="Hugenholtz P."/>
            <person name="Kyrpides N.C."/>
            <person name="Klenk H.P."/>
        </authorList>
    </citation>
    <scope>NUCLEOTIDE SEQUENCE [LARGE SCALE GENOMIC DNA]</scope>
    <source>
        <strain>ATCC BAA-671 / DSM 16294 / JCM 11897 / OK10</strain>
    </source>
</reference>
<reference key="2">
    <citation type="journal article" date="2017" name="Nat. Chem. Biol.">
        <title>Parallel evolution of non-homologous isofunctional enzymes in methionine biosynthesis.</title>
        <authorList>
            <person name="Bastard K."/>
            <person name="Perret A."/>
            <person name="Mariage A."/>
            <person name="Bessonnet T."/>
            <person name="Pinet-Turpault A."/>
            <person name="Petit J.L."/>
            <person name="Darii E."/>
            <person name="Bazire P."/>
            <person name="Vergne-Vaxelaire C."/>
            <person name="Brewee C."/>
            <person name="Debard A."/>
            <person name="Pellouin V."/>
            <person name="Besnard-Gonnet M."/>
            <person name="Artiguenave F."/>
            <person name="Medigue C."/>
            <person name="Vallenet D."/>
            <person name="Danchin A."/>
            <person name="Zaparucha A."/>
            <person name="Weissenbach J."/>
            <person name="Salanoubat M."/>
            <person name="de Berardinis V."/>
        </authorList>
    </citation>
    <scope>FUNCTION</scope>
    <scope>CATALYTIC ACTIVITY</scope>
</reference>
<protein>
    <recommendedName>
        <fullName evidence="1">Homoserine O-acetyltransferase</fullName>
        <shortName evidence="1 3">HAT</shortName>
        <ecNumber evidence="1 2">2.3.1.31</ecNumber>
    </recommendedName>
    <alternativeName>
        <fullName evidence="1">Homoserine transacetylase</fullName>
        <shortName evidence="1">HTA</shortName>
    </alternativeName>
</protein>